<evidence type="ECO:0000255" key="1">
    <source>
        <dbReference type="HAMAP-Rule" id="MF_00267"/>
    </source>
</evidence>
<organism>
    <name type="scientific">Neisseria gonorrhoeae</name>
    <dbReference type="NCBI Taxonomy" id="485"/>
    <lineage>
        <taxon>Bacteria</taxon>
        <taxon>Pseudomonadati</taxon>
        <taxon>Pseudomonadota</taxon>
        <taxon>Betaproteobacteria</taxon>
        <taxon>Neisseriales</taxon>
        <taxon>Neisseriaceae</taxon>
        <taxon>Neisseria</taxon>
    </lineage>
</organism>
<accession>Q9AG20</accession>
<dbReference type="EMBL" id="AF345908">
    <property type="protein sequence ID" value="AAK30125.1"/>
    <property type="molecule type" value="Genomic_DNA"/>
</dbReference>
<dbReference type="RefSeq" id="WP_003690056.1">
    <property type="nucleotide sequence ID" value="NZ_VCDH01000022.1"/>
</dbReference>
<dbReference type="SMR" id="Q9AG20"/>
<dbReference type="GeneID" id="66754323"/>
<dbReference type="GO" id="GO:0000902">
    <property type="term" value="P:cell morphogenesis"/>
    <property type="evidence" value="ECO:0007669"/>
    <property type="project" value="InterPro"/>
</dbReference>
<dbReference type="GO" id="GO:0000917">
    <property type="term" value="P:division septum assembly"/>
    <property type="evidence" value="ECO:0007669"/>
    <property type="project" value="UniProtKB-KW"/>
</dbReference>
<dbReference type="GO" id="GO:0051302">
    <property type="term" value="P:regulation of cell division"/>
    <property type="evidence" value="ECO:0007669"/>
    <property type="project" value="InterPro"/>
</dbReference>
<dbReference type="GO" id="GO:1901891">
    <property type="term" value="P:regulation of cell septum assembly"/>
    <property type="evidence" value="ECO:0007669"/>
    <property type="project" value="InterPro"/>
</dbReference>
<dbReference type="Gene3D" id="2.160.20.70">
    <property type="match status" value="1"/>
</dbReference>
<dbReference type="Gene3D" id="3.30.70.260">
    <property type="match status" value="1"/>
</dbReference>
<dbReference type="HAMAP" id="MF_00267">
    <property type="entry name" value="MinC"/>
    <property type="match status" value="1"/>
</dbReference>
<dbReference type="InterPro" id="IPR016098">
    <property type="entry name" value="CAP/MinC_C"/>
</dbReference>
<dbReference type="InterPro" id="IPR013033">
    <property type="entry name" value="MinC"/>
</dbReference>
<dbReference type="InterPro" id="IPR036145">
    <property type="entry name" value="MinC_C_sf"/>
</dbReference>
<dbReference type="InterPro" id="IPR007874">
    <property type="entry name" value="MinC_N"/>
</dbReference>
<dbReference type="InterPro" id="IPR005526">
    <property type="entry name" value="Septum_form_inhib_MinC_C"/>
</dbReference>
<dbReference type="NCBIfam" id="TIGR01222">
    <property type="entry name" value="minC"/>
    <property type="match status" value="1"/>
</dbReference>
<dbReference type="PANTHER" id="PTHR34108">
    <property type="entry name" value="SEPTUM SITE-DETERMINING PROTEIN MINC"/>
    <property type="match status" value="1"/>
</dbReference>
<dbReference type="PANTHER" id="PTHR34108:SF1">
    <property type="entry name" value="SEPTUM SITE-DETERMINING PROTEIN MINC"/>
    <property type="match status" value="1"/>
</dbReference>
<dbReference type="Pfam" id="PF03775">
    <property type="entry name" value="MinC_C"/>
    <property type="match status" value="1"/>
</dbReference>
<dbReference type="Pfam" id="PF05209">
    <property type="entry name" value="MinC_N"/>
    <property type="match status" value="1"/>
</dbReference>
<dbReference type="SUPFAM" id="SSF63848">
    <property type="entry name" value="Cell-division inhibitor MinC, C-terminal domain"/>
    <property type="match status" value="1"/>
</dbReference>
<reference key="1">
    <citation type="journal article" date="2001" name="Microbiology">
        <title>Deletion of the cell-division inhibitor MinC results in lysis of Neisseria gonorrhoeae.</title>
        <authorList>
            <person name="Ramirez-Arcos S."/>
            <person name="Szeto J."/>
            <person name="Beveridge T."/>
            <person name="Victor C."/>
            <person name="Francis F."/>
            <person name="Dillon J."/>
        </authorList>
    </citation>
    <scope>NUCLEOTIDE SEQUENCE [GENOMIC DNA]</scope>
    <source>
        <strain>CH811</strain>
    </source>
</reference>
<keyword id="KW-0131">Cell cycle</keyword>
<keyword id="KW-0132">Cell division</keyword>
<keyword id="KW-0717">Septation</keyword>
<name>MINC_NEIGO</name>
<proteinExistence type="inferred from homology"/>
<feature type="chain" id="PRO_0000189044" description="Probable septum site-determining protein MinC">
    <location>
        <begin position="1"/>
        <end position="237"/>
    </location>
</feature>
<protein>
    <recommendedName>
        <fullName evidence="1">Probable septum site-determining protein MinC</fullName>
    </recommendedName>
</protein>
<sequence>MMVYIMNAFDIKSTKMDVLSISLHTSDLFDLEDVLVKLGKKFQESGVVPFVLDVQEFDYPESLDLAALVSLFSRHGMQILGLKHSNERWAAVAMKYHLLFCLSHSENVKELGQVEVQKTEDGQKARKTVLITSPVRTGQQVYAEDGDLIVTGAVNQGAELIADGNMHIYAPMRGRALAGAKGDTSARIFIHSMQAELVSVAGIYRNFEQDLPDHLHKQPVQILLQDNRLVISAIGSE</sequence>
<comment type="function">
    <text evidence="1">Cell division inhibitor that blocks the formation of polar Z ring septums. Rapidly oscillates between the poles of the cell to destabilize FtsZ filaments that have formed before they mature into polar Z rings. Prevents FtsZ polymerization.</text>
</comment>
<comment type="subunit">
    <text evidence="1">Interacts with MinD and FtsZ.</text>
</comment>
<comment type="similarity">
    <text evidence="1">Belongs to the MinC family.</text>
</comment>
<gene>
    <name evidence="1" type="primary">minC</name>
</gene>